<sequence>MTGLIQNRDSFLDNIAKELGRTRKTDGVERPVWKNNVNKETLKDYSQEELLEVFKNQCTNIHTTVVETTNDRLREDIQKVIVENGGGPIMLSADERFDSYGLTSLFKEELPKQNVEVNVWDPEKKEENMRIAERANIGIAFSDYTLAESGTIVVQSHKGQGRSLHFLPTVYFAIIPRETLVPRITQAVQDMNTRVENGEEVASCINFITGPSNSADIEMNLVVGVHGPLKAVYFIV</sequence>
<feature type="chain" id="PRO_0000383996" description="Lactate utilization protein C">
    <location>
        <begin position="1"/>
        <end position="236"/>
    </location>
</feature>
<proteinExistence type="inferred from homology"/>
<evidence type="ECO:0000255" key="1">
    <source>
        <dbReference type="HAMAP-Rule" id="MF_02104"/>
    </source>
</evidence>
<protein>
    <recommendedName>
        <fullName evidence="1">Lactate utilization protein C</fullName>
    </recommendedName>
</protein>
<gene>
    <name evidence="1" type="primary">lutC</name>
    <name type="ordered locus">BCA_1356</name>
</gene>
<accession>C1EM12</accession>
<reference key="1">
    <citation type="submission" date="2009-02" db="EMBL/GenBank/DDBJ databases">
        <title>Genome sequence of Bacillus cereus 03BB102.</title>
        <authorList>
            <person name="Dodson R.J."/>
            <person name="Jackson P."/>
            <person name="Munk A.C."/>
            <person name="Brettin T."/>
            <person name="Bruce D."/>
            <person name="Detter C."/>
            <person name="Tapia R."/>
            <person name="Han C."/>
            <person name="Sutton G."/>
            <person name="Sims D."/>
        </authorList>
    </citation>
    <scope>NUCLEOTIDE SEQUENCE [LARGE SCALE GENOMIC DNA]</scope>
    <source>
        <strain>03BB102</strain>
    </source>
</reference>
<name>LUTC_BACC3</name>
<dbReference type="EMBL" id="CP001407">
    <property type="protein sequence ID" value="ACO26686.1"/>
    <property type="molecule type" value="Genomic_DNA"/>
</dbReference>
<dbReference type="RefSeq" id="WP_000147197.1">
    <property type="nucleotide sequence ID" value="NZ_CP009318.1"/>
</dbReference>
<dbReference type="SMR" id="C1EM12"/>
<dbReference type="KEGG" id="bcx:BCA_1356"/>
<dbReference type="PATRIC" id="fig|572264.18.peg.1309"/>
<dbReference type="Proteomes" id="UP000002210">
    <property type="component" value="Chromosome"/>
</dbReference>
<dbReference type="GO" id="GO:0006089">
    <property type="term" value="P:lactate metabolic process"/>
    <property type="evidence" value="ECO:0007669"/>
    <property type="project" value="UniProtKB-UniRule"/>
</dbReference>
<dbReference type="Gene3D" id="3.40.50.10420">
    <property type="entry name" value="NagB/RpiA/CoA transferase-like"/>
    <property type="match status" value="1"/>
</dbReference>
<dbReference type="HAMAP" id="MF_02104">
    <property type="entry name" value="LutC"/>
    <property type="match status" value="1"/>
</dbReference>
<dbReference type="InterPro" id="IPR024185">
    <property type="entry name" value="FTHF_cligase-like_sf"/>
</dbReference>
<dbReference type="InterPro" id="IPR003741">
    <property type="entry name" value="LUD_dom"/>
</dbReference>
<dbReference type="InterPro" id="IPR022823">
    <property type="entry name" value="LutC"/>
</dbReference>
<dbReference type="InterPro" id="IPR037171">
    <property type="entry name" value="NagB/RpiA_transferase-like"/>
</dbReference>
<dbReference type="PANTHER" id="PTHR43682">
    <property type="entry name" value="LACTATE UTILIZATION PROTEIN C"/>
    <property type="match status" value="1"/>
</dbReference>
<dbReference type="PANTHER" id="PTHR43682:SF1">
    <property type="entry name" value="LACTATE UTILIZATION PROTEIN C"/>
    <property type="match status" value="1"/>
</dbReference>
<dbReference type="Pfam" id="PF02589">
    <property type="entry name" value="LUD_dom"/>
    <property type="match status" value="1"/>
</dbReference>
<dbReference type="SUPFAM" id="SSF100950">
    <property type="entry name" value="NagB/RpiA/CoA transferase-like"/>
    <property type="match status" value="1"/>
</dbReference>
<organism>
    <name type="scientific">Bacillus cereus (strain 03BB102)</name>
    <dbReference type="NCBI Taxonomy" id="572264"/>
    <lineage>
        <taxon>Bacteria</taxon>
        <taxon>Bacillati</taxon>
        <taxon>Bacillota</taxon>
        <taxon>Bacilli</taxon>
        <taxon>Bacillales</taxon>
        <taxon>Bacillaceae</taxon>
        <taxon>Bacillus</taxon>
        <taxon>Bacillus cereus group</taxon>
    </lineage>
</organism>
<comment type="function">
    <text evidence="1">Is involved in L-lactate degradation and allows cells to grow with lactate as the sole carbon source.</text>
</comment>
<comment type="similarity">
    <text evidence="1">Belongs to the LutC/YkgG family.</text>
</comment>